<feature type="chain" id="PRO_0000235961" description="Exopolysaccharide phosphotransferase SCO6021">
    <location>
        <begin position="1"/>
        <end position="541"/>
    </location>
</feature>
<dbReference type="EC" id="2.7.-.-"/>
<dbReference type="EMBL" id="AL939126">
    <property type="protein sequence ID" value="CAA19233.1"/>
    <property type="molecule type" value="Genomic_DNA"/>
</dbReference>
<dbReference type="PIR" id="T34701">
    <property type="entry name" value="T34701"/>
</dbReference>
<dbReference type="RefSeq" id="NP_630132.1">
    <property type="nucleotide sequence ID" value="NC_003888.3"/>
</dbReference>
<dbReference type="RefSeq" id="WP_011030599.1">
    <property type="nucleotide sequence ID" value="NZ_VNID01000009.1"/>
</dbReference>
<dbReference type="SMR" id="O69851"/>
<dbReference type="STRING" id="100226.gene:17763680"/>
<dbReference type="PaxDb" id="100226-SCO6021"/>
<dbReference type="KEGG" id="sco:SCO6021"/>
<dbReference type="PATRIC" id="fig|100226.15.peg.6121"/>
<dbReference type="eggNOG" id="COG0438">
    <property type="taxonomic scope" value="Bacteria"/>
</dbReference>
<dbReference type="HOGENOM" id="CLU_033996_0_0_11"/>
<dbReference type="InParanoid" id="O69851"/>
<dbReference type="OrthoDB" id="9776077at2"/>
<dbReference type="PhylomeDB" id="O69851"/>
<dbReference type="Proteomes" id="UP000001973">
    <property type="component" value="Chromosome"/>
</dbReference>
<dbReference type="GO" id="GO:0016772">
    <property type="term" value="F:transferase activity, transferring phosphorus-containing groups"/>
    <property type="evidence" value="ECO:0007669"/>
    <property type="project" value="InterPro"/>
</dbReference>
<dbReference type="GO" id="GO:0000271">
    <property type="term" value="P:polysaccharide biosynthetic process"/>
    <property type="evidence" value="ECO:0007669"/>
    <property type="project" value="UniProtKB-KW"/>
</dbReference>
<dbReference type="InterPro" id="IPR047141">
    <property type="entry name" value="Stealth"/>
</dbReference>
<dbReference type="InterPro" id="IPR031358">
    <property type="entry name" value="Stealth_CR1"/>
</dbReference>
<dbReference type="InterPro" id="IPR021520">
    <property type="entry name" value="Stealth_CR2"/>
</dbReference>
<dbReference type="InterPro" id="IPR031357">
    <property type="entry name" value="Stealth_CR3"/>
</dbReference>
<dbReference type="InterPro" id="IPR031356">
    <property type="entry name" value="Stealth_CR4"/>
</dbReference>
<dbReference type="PANTHER" id="PTHR24045">
    <property type="match status" value="1"/>
</dbReference>
<dbReference type="PANTHER" id="PTHR24045:SF0">
    <property type="entry name" value="N-ACETYLGLUCOSAMINE-1-PHOSPHOTRANSFERASE SUBUNITS ALPHA_BETA"/>
    <property type="match status" value="1"/>
</dbReference>
<dbReference type="Pfam" id="PF17101">
    <property type="entry name" value="Stealth_CR1"/>
    <property type="match status" value="1"/>
</dbReference>
<dbReference type="Pfam" id="PF11380">
    <property type="entry name" value="Stealth_CR2"/>
    <property type="match status" value="1"/>
</dbReference>
<dbReference type="Pfam" id="PF17102">
    <property type="entry name" value="Stealth_CR3"/>
    <property type="match status" value="1"/>
</dbReference>
<dbReference type="Pfam" id="PF17103">
    <property type="entry name" value="Stealth_CR4"/>
    <property type="match status" value="1"/>
</dbReference>
<protein>
    <recommendedName>
        <fullName>Exopolysaccharide phosphotransferase SCO6021</fullName>
        <ecNumber>2.7.-.-</ecNumber>
    </recommendedName>
    <alternativeName>
        <fullName>Stealth protein SCO6021</fullName>
    </alternativeName>
</protein>
<sequence length="541" mass="60084">MTTVSDFTAHQTATAVVARKGTAGPRPSAVDAPATLTDEHGDVYVEPGLTPLAAREANRSALVGLLDAAGVGHFAVRGTVDHGTVVGVAEEDRERALQAVFRGLGQYPGHLSVVDPDAPRPAKPVSSRDPRAWREVVGARILQVSWYRTDPGRHLLLGHEYGCALEFWRRQGTCLVAPRANRATWAVAVGGPNVMGAARLFSRFVSDWTPGHLAPALPTRPEFLVNCADDIAFPVDAVYTWVDGNDPAWKQRKAQAKGEVYHAESASDARFISRDELRYSIRSLHLFAPWIRNIYVVTDDQVPAWMREDLPGARIATHREIFRNPEDLPTFNSHSIESQLHHIEGLAEHFLYFNDDMFMGRPVAPHSFFTPNGTARYFPSRNRIPQGAVAETDSPVDAACKNNRALLHERFGKVITQPMEHIPYALRRSAMAEAELEFPEAWARTSASRFRAMTDLSPTSSFALYYAALTGRAQPGSMPFTYIQLAVPDLADRLQRLLDGRDQDSFCLNDAFSTPEDTEAQQELLDDFFTSYFPTPSPYER</sequence>
<evidence type="ECO:0000305" key="1"/>
<organism>
    <name type="scientific">Streptomyces coelicolor (strain ATCC BAA-471 / A3(2) / M145)</name>
    <dbReference type="NCBI Taxonomy" id="100226"/>
    <lineage>
        <taxon>Bacteria</taxon>
        <taxon>Bacillati</taxon>
        <taxon>Actinomycetota</taxon>
        <taxon>Actinomycetes</taxon>
        <taxon>Kitasatosporales</taxon>
        <taxon>Streptomycetaceae</taxon>
        <taxon>Streptomyces</taxon>
        <taxon>Streptomyces albidoflavus group</taxon>
    </lineage>
</organism>
<comment type="miscellaneous">
    <text>Stealth proteins are part of a protein family that is conserved from bacteria to higher eukaryotes. Family members were first identified in microbes as proteins that help pathogens to elude the host innate immune system. Microbial stealth proteins are involved in the biosynthesis of exopolysaccharides. Stealth proteins are predicted to function as hexose-1-phosphoryltransferases.</text>
</comment>
<comment type="similarity">
    <text evidence="1">Belongs to the stealth family.</text>
</comment>
<name>Y6021_STRCO</name>
<reference key="1">
    <citation type="journal article" date="2002" name="Nature">
        <title>Complete genome sequence of the model actinomycete Streptomyces coelicolor A3(2).</title>
        <authorList>
            <person name="Bentley S.D."/>
            <person name="Chater K.F."/>
            <person name="Cerdeno-Tarraga A.-M."/>
            <person name="Challis G.L."/>
            <person name="Thomson N.R."/>
            <person name="James K.D."/>
            <person name="Harris D.E."/>
            <person name="Quail M.A."/>
            <person name="Kieser H."/>
            <person name="Harper D."/>
            <person name="Bateman A."/>
            <person name="Brown S."/>
            <person name="Chandra G."/>
            <person name="Chen C.W."/>
            <person name="Collins M."/>
            <person name="Cronin A."/>
            <person name="Fraser A."/>
            <person name="Goble A."/>
            <person name="Hidalgo J."/>
            <person name="Hornsby T."/>
            <person name="Howarth S."/>
            <person name="Huang C.-H."/>
            <person name="Kieser T."/>
            <person name="Larke L."/>
            <person name="Murphy L.D."/>
            <person name="Oliver K."/>
            <person name="O'Neil S."/>
            <person name="Rabbinowitsch E."/>
            <person name="Rajandream M.A."/>
            <person name="Rutherford K.M."/>
            <person name="Rutter S."/>
            <person name="Seeger K."/>
            <person name="Saunders D."/>
            <person name="Sharp S."/>
            <person name="Squares R."/>
            <person name="Squares S."/>
            <person name="Taylor K."/>
            <person name="Warren T."/>
            <person name="Wietzorrek A."/>
            <person name="Woodward J.R."/>
            <person name="Barrell B.G."/>
            <person name="Parkhill J."/>
            <person name="Hopwood D.A."/>
        </authorList>
    </citation>
    <scope>NUCLEOTIDE SEQUENCE [LARGE SCALE GENOMIC DNA]</scope>
    <source>
        <strain>ATCC BAA-471 / A3(2) / M145</strain>
    </source>
</reference>
<reference key="2">
    <citation type="journal article" date="2005" name="PLoS Comput. Biol.">
        <title>Stealth proteins: in silico identification of a novel protein family rendering bacterial pathogens invisible to host immune defense.</title>
        <authorList>
            <person name="Sperisen P."/>
            <person name="Schmid C.D."/>
            <person name="Bucher P."/>
            <person name="Zilian O."/>
        </authorList>
    </citation>
    <scope>IDENTIFICATION AS A STEALTH PROTEIN</scope>
    <scope>PREDICTION OF FUNCTION</scope>
</reference>
<gene>
    <name type="ordered locus">SCO6021</name>
    <name type="ORF">SC1C3.09</name>
</gene>
<proteinExistence type="inferred from homology"/>
<keyword id="KW-0270">Exopolysaccharide synthesis</keyword>
<keyword id="KW-1185">Reference proteome</keyword>
<keyword id="KW-0808">Transferase</keyword>
<accession>O69851</accession>